<feature type="chain" id="PRO_0000058487" description="Proline-rich nuclear receptor coactivator 2">
    <location>
        <begin position="1"/>
        <end position="134"/>
    </location>
</feature>
<feature type="region of interest" description="Disordered" evidence="4">
    <location>
        <begin position="1"/>
        <end position="74"/>
    </location>
</feature>
<feature type="short sequence motif" description="SH3-binding">
    <location>
        <begin position="94"/>
        <end position="100"/>
    </location>
</feature>
<feature type="compositionally biased region" description="Polar residues" evidence="4">
    <location>
        <begin position="11"/>
        <end position="24"/>
    </location>
</feature>
<feature type="compositionally biased region" description="Polar residues" evidence="4">
    <location>
        <begin position="52"/>
        <end position="61"/>
    </location>
</feature>
<feature type="compositionally biased region" description="Low complexity" evidence="4">
    <location>
        <begin position="62"/>
        <end position="74"/>
    </location>
</feature>
<protein>
    <recommendedName>
        <fullName>Proline-rich nuclear receptor coactivator 2</fullName>
    </recommendedName>
</protein>
<evidence type="ECO:0000250" key="1"/>
<evidence type="ECO:0000250" key="2">
    <source>
        <dbReference type="UniProtKB" id="Q9CR73"/>
    </source>
</evidence>
<evidence type="ECO:0000250" key="3">
    <source>
        <dbReference type="UniProtKB" id="Q9NPJ4"/>
    </source>
</evidence>
<evidence type="ECO:0000256" key="4">
    <source>
        <dbReference type="SAM" id="MobiDB-lite"/>
    </source>
</evidence>
<evidence type="ECO:0000305" key="5"/>
<accession>Q66HE1</accession>
<dbReference type="EMBL" id="BC081903">
    <property type="protein sequence ID" value="AAH81903.1"/>
    <property type="molecule type" value="mRNA"/>
</dbReference>
<dbReference type="RefSeq" id="NP_001096830.1">
    <property type="nucleotide sequence ID" value="NM_001103360.1"/>
</dbReference>
<dbReference type="FunCoup" id="Q66HE1">
    <property type="interactions" value="2096"/>
</dbReference>
<dbReference type="STRING" id="10116.ENSRNOP00000070641"/>
<dbReference type="PhosphoSitePlus" id="Q66HE1"/>
<dbReference type="PaxDb" id="10116-ENSRNOP00000012258"/>
<dbReference type="Ensembl" id="ENSRNOT00000012258.4">
    <property type="protein sequence ID" value="ENSRNOP00000012258.2"/>
    <property type="gene ID" value="ENSRNOG00000070268.1"/>
</dbReference>
<dbReference type="Ensembl" id="ENSRNOT00000104557.1">
    <property type="protein sequence ID" value="ENSRNOP00000084836.1"/>
    <property type="gene ID" value="ENSRNOG00000070268.1"/>
</dbReference>
<dbReference type="GeneID" id="100125373"/>
<dbReference type="KEGG" id="rno:100125373"/>
<dbReference type="AGR" id="RGD:1642418"/>
<dbReference type="CTD" id="55629"/>
<dbReference type="RGD" id="1642418">
    <property type="gene designation" value="Pnrc2"/>
</dbReference>
<dbReference type="eggNOG" id="ENOG502RZZX">
    <property type="taxonomic scope" value="Eukaryota"/>
</dbReference>
<dbReference type="GeneTree" id="ENSGT00530000063881"/>
<dbReference type="HOGENOM" id="CLU_086541_1_0_1"/>
<dbReference type="InParanoid" id="Q66HE1"/>
<dbReference type="OMA" id="RNTTKNH"/>
<dbReference type="OrthoDB" id="8732832at2759"/>
<dbReference type="PhylomeDB" id="Q66HE1"/>
<dbReference type="Reactome" id="R-RNO-975957">
    <property type="pathway name" value="Nonsense Mediated Decay (NMD) enhanced by the Exon Junction Complex (EJC)"/>
</dbReference>
<dbReference type="PRO" id="PR:Q66HE1"/>
<dbReference type="Proteomes" id="UP000002494">
    <property type="component" value="Chromosome 5"/>
</dbReference>
<dbReference type="Bgee" id="ENSRNOG00000009248">
    <property type="expression patterns" value="Expressed in thymus and 20 other cell types or tissues"/>
</dbReference>
<dbReference type="ExpressionAtlas" id="Q66HE1">
    <property type="expression patterns" value="baseline and differential"/>
</dbReference>
<dbReference type="GO" id="GO:0005794">
    <property type="term" value="C:Golgi apparatus"/>
    <property type="evidence" value="ECO:0007669"/>
    <property type="project" value="Ensembl"/>
</dbReference>
<dbReference type="GO" id="GO:0005654">
    <property type="term" value="C:nucleoplasm"/>
    <property type="evidence" value="ECO:0007669"/>
    <property type="project" value="Ensembl"/>
</dbReference>
<dbReference type="GO" id="GO:0005634">
    <property type="term" value="C:nucleus"/>
    <property type="evidence" value="ECO:0000250"/>
    <property type="project" value="UniProtKB"/>
</dbReference>
<dbReference type="GO" id="GO:0000932">
    <property type="term" value="C:P-body"/>
    <property type="evidence" value="ECO:0000250"/>
    <property type="project" value="UniProtKB"/>
</dbReference>
<dbReference type="GO" id="GO:0000184">
    <property type="term" value="P:nuclear-transcribed mRNA catabolic process, nonsense-mediated decay"/>
    <property type="evidence" value="ECO:0000250"/>
    <property type="project" value="UniProtKB"/>
</dbReference>
<dbReference type="InterPro" id="IPR028322">
    <property type="entry name" value="PNRC-like_rgn"/>
</dbReference>
<dbReference type="InterPro" id="IPR026780">
    <property type="entry name" value="PNRC1/2"/>
</dbReference>
<dbReference type="PANTHER" id="PTHR15405">
    <property type="entry name" value="PROLINE-RICH NUCLEAR RECEPTOR COACTIVATOR"/>
    <property type="match status" value="1"/>
</dbReference>
<dbReference type="Pfam" id="PF15365">
    <property type="entry name" value="PNRC"/>
    <property type="match status" value="1"/>
</dbReference>
<reference key="1">
    <citation type="journal article" date="2004" name="Genome Res.">
        <title>The status, quality, and expansion of the NIH full-length cDNA project: the Mammalian Gene Collection (MGC).</title>
        <authorList>
            <consortium name="The MGC Project Team"/>
        </authorList>
    </citation>
    <scope>NUCLEOTIDE SEQUENCE [LARGE SCALE MRNA]</scope>
    <source>
        <tissue>Kidney</tissue>
    </source>
</reference>
<proteinExistence type="evidence at transcript level"/>
<sequence length="134" mass="14881">MGGGERYNIPDPQSRNASKNQQQHNRQKTKDQNSQMKIVHKKKERGHGYNPSAVQNGGKTKSLSNNSNWNASLSSPSLLFKSQASQNYAGAKFSEPPSPSVLPKPPSHWVHVSLNPSDKETMTFQLKTLLKVQV</sequence>
<organism>
    <name type="scientific">Rattus norvegicus</name>
    <name type="common">Rat</name>
    <dbReference type="NCBI Taxonomy" id="10116"/>
    <lineage>
        <taxon>Eukaryota</taxon>
        <taxon>Metazoa</taxon>
        <taxon>Chordata</taxon>
        <taxon>Craniata</taxon>
        <taxon>Vertebrata</taxon>
        <taxon>Euteleostomi</taxon>
        <taxon>Mammalia</taxon>
        <taxon>Eutheria</taxon>
        <taxon>Euarchontoglires</taxon>
        <taxon>Glires</taxon>
        <taxon>Rodentia</taxon>
        <taxon>Myomorpha</taxon>
        <taxon>Muroidea</taxon>
        <taxon>Muridae</taxon>
        <taxon>Murinae</taxon>
        <taxon>Rattus</taxon>
    </lineage>
</organism>
<keyword id="KW-0010">Activator</keyword>
<keyword id="KW-0963">Cytoplasm</keyword>
<keyword id="KW-0866">Nonsense-mediated mRNA decay</keyword>
<keyword id="KW-0539">Nucleus</keyword>
<keyword id="KW-1185">Reference proteome</keyword>
<keyword id="KW-0804">Transcription</keyword>
<keyword id="KW-0805">Transcription regulation</keyword>
<gene>
    <name type="primary">Pnrc2</name>
</gene>
<name>PNRC2_RAT</name>
<comment type="function">
    <text evidence="2 3">Involved in nonsense-mediated mRNA decay (NMD) by acting as a bridge between the mRNA decapping complex and the NMD machinery. May act by targeting the NMD machinery to the P-body and recruiting the decapping machinery to aberrant mRNAs. Required for UPF1/RENT1 localization to the P-body. Plays a role in glucocorticoid receptor-mediated mRNA degradation by interacting with the glucocorticoid receptor NR3C1 in a ligand-dependent manner when it is bound to the 5' UTR of target mRNAs and recruiting the RNA helicase UPF1 and the mRNA-decapping enzyme DCP1A, leading to RNA decay. Also acts as a nuclear receptor coactivator. May play a role in controlling the energy balance between energy storage and energy expenditure.</text>
</comment>
<comment type="subunit">
    <text evidence="3">Interacts with UPF1/RENT1; preferentially interacts with hyperphosphorylated form. Interacts with DCP1A. Interacts with many nuclear receptors including ESR1, ESRRA, ESRRG, NR3C1/GR, NR5A1, PGR, TR, RAR and RXR.</text>
</comment>
<comment type="subcellular location">
    <subcellularLocation>
        <location evidence="1">Nucleus</location>
    </subcellularLocation>
    <subcellularLocation>
        <location evidence="1">Cytoplasm</location>
        <location evidence="1">P-body</location>
    </subcellularLocation>
</comment>
<comment type="domain">
    <text evidence="1">The interaction between PNRC2 and nuclear receptors is dependent on the SH3 binding motif.</text>
</comment>
<comment type="similarity">
    <text evidence="5">Belongs to the PNRC family. PNRC2 subfamily.</text>
</comment>